<comment type="function">
    <text evidence="1 2 3">Multifunctional anion transporter that operates via two distinct transport mechanisms, namely proton-coupled anion cotransport and membrane potential-dependent anion transport (By similarity). Electroneutral proton-coupled acidic monosaccharide symporter, with a sugar to proton stoichiometry of 1:1. Exports glucuronic acid and free sialic acid derived from sialoglycoconjugate degradation out of lysosomes, driven by outwardly directed lysosomal pH gradient. May regulate lysosome function and metabolism of sialylated conjugates that impact oligodendrocyte lineage differentiation and myelinogenesis in the central nervous system (By similarity). Electrogenic proton-coupled nitrate symporter that transports nitrate ions across the basolateral membrane of salivary gland acinar cells, with nitrate to proton stoichiometry of 2:1. May contribute to nitrate clearance from serum by salivary glands, where it is further concentrated and secreted in the saliva (By similarity). Uses membrane potential to drive the uptake of acidic amino acids and peptides into synaptic vesicles. Responsible for synaptic vesicular storage of L-aspartate and L-glutamate in pinealocytes as well as vesicular uptake of N-acetyl-L-aspartyl-L-glutamate neuropeptide, relevant to aspartegic-associated glutamatergic neurotransmission and activation of metabotropic receptors that inhibit subsequent transmitter release (By similarity).</text>
</comment>
<comment type="function">
    <text evidence="6">Receptor for CM101, a polysaccharide produced by group B Streptococcus with antipathoangiogenic properties.</text>
</comment>
<comment type="catalytic activity">
    <reaction evidence="3">
        <text>N-acetylneuraminate(in) + H(+)(in) = N-acetylneuraminate(out) + H(+)(out)</text>
        <dbReference type="Rhea" id="RHEA:28987"/>
        <dbReference type="ChEBI" id="CHEBI:15378"/>
        <dbReference type="ChEBI" id="CHEBI:35418"/>
    </reaction>
    <physiologicalReaction direction="right-to-left" evidence="3">
        <dbReference type="Rhea" id="RHEA:28989"/>
    </physiologicalReaction>
</comment>
<comment type="catalytic activity">
    <reaction evidence="1 3">
        <text>D-glucuronate(out) + H(+)(out) = D-glucuronate(in) + H(+)(in)</text>
        <dbReference type="Rhea" id="RHEA:72591"/>
        <dbReference type="ChEBI" id="CHEBI:15378"/>
        <dbReference type="ChEBI" id="CHEBI:58720"/>
    </reaction>
    <physiologicalReaction direction="left-to-right" evidence="3">
        <dbReference type="Rhea" id="RHEA:72592"/>
    </physiologicalReaction>
</comment>
<comment type="catalytic activity">
    <reaction evidence="3">
        <text>2 nitrate(out) + H(+)(out) = 2 nitrate(in) + H(+)(in)</text>
        <dbReference type="Rhea" id="RHEA:71539"/>
        <dbReference type="ChEBI" id="CHEBI:15378"/>
        <dbReference type="ChEBI" id="CHEBI:17632"/>
    </reaction>
    <physiologicalReaction direction="left-to-right" evidence="3">
        <dbReference type="Rhea" id="RHEA:71540"/>
    </physiologicalReaction>
</comment>
<comment type="catalytic activity">
    <reaction evidence="3">
        <text>L-aspartate(out) = L-aspartate(in)</text>
        <dbReference type="Rhea" id="RHEA:66332"/>
        <dbReference type="ChEBI" id="CHEBI:29991"/>
    </reaction>
    <physiologicalReaction direction="left-to-right" evidence="3">
        <dbReference type="Rhea" id="RHEA:66333"/>
    </physiologicalReaction>
</comment>
<comment type="catalytic activity">
    <reaction evidence="3">
        <text>L-glutamate(out) = L-glutamate(in)</text>
        <dbReference type="Rhea" id="RHEA:66336"/>
        <dbReference type="ChEBI" id="CHEBI:29985"/>
    </reaction>
    <physiologicalReaction direction="left-to-right" evidence="3">
        <dbReference type="Rhea" id="RHEA:66337"/>
    </physiologicalReaction>
</comment>
<comment type="catalytic activity">
    <reaction evidence="3">
        <text>N-acetyl-L-aspartyl-L-glutamate(out) = N-acetyl-L-aspartyl-L-glutamate(in)</text>
        <dbReference type="Rhea" id="RHEA:72599"/>
        <dbReference type="ChEBI" id="CHEBI:76931"/>
    </reaction>
    <physiologicalReaction direction="left-to-right" evidence="3">
        <dbReference type="Rhea" id="RHEA:72600"/>
    </physiologicalReaction>
</comment>
<comment type="subcellular location">
    <subcellularLocation>
        <location evidence="3">Basolateral cell membrane</location>
        <topology evidence="4">Multi-pass membrane protein</topology>
    </subcellularLocation>
    <subcellularLocation>
        <location evidence="3">Cytoplasmic vesicle</location>
        <location evidence="3">Secretory vesicle</location>
        <location evidence="3">Synaptic vesicle membrane</location>
        <topology evidence="4">Multi-pass membrane protein</topology>
    </subcellularLocation>
    <subcellularLocation>
        <location evidence="3">Lysosome membrane</location>
        <topology evidence="4">Multi-pass membrane protein</topology>
    </subcellularLocation>
</comment>
<comment type="tissue specificity">
    <text evidence="6">Significantly expressed in lung endothelial cells, and much less in liver.</text>
</comment>
<comment type="similarity">
    <text evidence="7">Belongs to the major facilitator superfamily. Sodium/anion cotransporter family.</text>
</comment>
<keyword id="KW-1003">Cell membrane</keyword>
<keyword id="KW-0968">Cytoplasmic vesicle</keyword>
<keyword id="KW-0325">Glycoprotein</keyword>
<keyword id="KW-0458">Lysosome</keyword>
<keyword id="KW-0472">Membrane</keyword>
<keyword id="KW-0597">Phosphoprotein</keyword>
<keyword id="KW-0675">Receptor</keyword>
<keyword id="KW-1185">Reference proteome</keyword>
<keyword id="KW-0769">Symport</keyword>
<keyword id="KW-0770">Synapse</keyword>
<keyword id="KW-0812">Transmembrane</keyword>
<keyword id="KW-1133">Transmembrane helix</keyword>
<keyword id="KW-0813">Transport</keyword>
<proteinExistence type="evidence at transcript level"/>
<name>S17A5_SHEEP</name>
<organism>
    <name type="scientific">Ovis aries</name>
    <name type="common">Sheep</name>
    <dbReference type="NCBI Taxonomy" id="9940"/>
    <lineage>
        <taxon>Eukaryota</taxon>
        <taxon>Metazoa</taxon>
        <taxon>Chordata</taxon>
        <taxon>Craniata</taxon>
        <taxon>Vertebrata</taxon>
        <taxon>Euteleostomi</taxon>
        <taxon>Mammalia</taxon>
        <taxon>Eutheria</taxon>
        <taxon>Laurasiatheria</taxon>
        <taxon>Artiodactyla</taxon>
        <taxon>Ruminantia</taxon>
        <taxon>Pecora</taxon>
        <taxon>Bovidae</taxon>
        <taxon>Caprinae</taxon>
        <taxon>Ovis</taxon>
    </lineage>
</organism>
<dbReference type="EMBL" id="AF244578">
    <property type="protein sequence ID" value="AAF97770.1"/>
    <property type="molecule type" value="mRNA"/>
</dbReference>
<dbReference type="RefSeq" id="NP_001009742.1">
    <property type="nucleotide sequence ID" value="NM_001009742.1"/>
</dbReference>
<dbReference type="SMR" id="Q9MZD1"/>
<dbReference type="STRING" id="9940.ENSOARP00000006649"/>
<dbReference type="PaxDb" id="9940-ENSOARP00000006649"/>
<dbReference type="GeneID" id="443098"/>
<dbReference type="KEGG" id="oas:443098"/>
<dbReference type="CTD" id="26503"/>
<dbReference type="eggNOG" id="KOG2532">
    <property type="taxonomic scope" value="Eukaryota"/>
</dbReference>
<dbReference type="OrthoDB" id="2985014at2759"/>
<dbReference type="Proteomes" id="UP000002356">
    <property type="component" value="Unplaced"/>
</dbReference>
<dbReference type="GO" id="GO:0016324">
    <property type="term" value="C:apical plasma membrane"/>
    <property type="evidence" value="ECO:0007669"/>
    <property type="project" value="TreeGrafter"/>
</dbReference>
<dbReference type="GO" id="GO:0016323">
    <property type="term" value="C:basolateral plasma membrane"/>
    <property type="evidence" value="ECO:0007669"/>
    <property type="project" value="UniProtKB-SubCell"/>
</dbReference>
<dbReference type="GO" id="GO:0005765">
    <property type="term" value="C:lysosomal membrane"/>
    <property type="evidence" value="ECO:0007669"/>
    <property type="project" value="UniProtKB-SubCell"/>
</dbReference>
<dbReference type="GO" id="GO:0030672">
    <property type="term" value="C:synaptic vesicle membrane"/>
    <property type="evidence" value="ECO:0007669"/>
    <property type="project" value="UniProtKB-SubCell"/>
</dbReference>
<dbReference type="GO" id="GO:0015293">
    <property type="term" value="F:symporter activity"/>
    <property type="evidence" value="ECO:0007669"/>
    <property type="project" value="UniProtKB-KW"/>
</dbReference>
<dbReference type="GO" id="GO:0006820">
    <property type="term" value="P:monoatomic anion transport"/>
    <property type="evidence" value="ECO:0007669"/>
    <property type="project" value="TreeGrafter"/>
</dbReference>
<dbReference type="CDD" id="cd17381">
    <property type="entry name" value="MFS_SLC17A5"/>
    <property type="match status" value="1"/>
</dbReference>
<dbReference type="FunFam" id="1.20.1250.20:FF:000067">
    <property type="entry name" value="sialin isoform X2"/>
    <property type="match status" value="1"/>
</dbReference>
<dbReference type="FunFam" id="1.20.1250.20:FF:000003">
    <property type="entry name" value="Solute carrier family 17 member 3"/>
    <property type="match status" value="1"/>
</dbReference>
<dbReference type="Gene3D" id="1.20.1250.20">
    <property type="entry name" value="MFS general substrate transporter like domains"/>
    <property type="match status" value="2"/>
</dbReference>
<dbReference type="InterPro" id="IPR011701">
    <property type="entry name" value="MFS"/>
</dbReference>
<dbReference type="InterPro" id="IPR020846">
    <property type="entry name" value="MFS_dom"/>
</dbReference>
<dbReference type="InterPro" id="IPR050382">
    <property type="entry name" value="MFS_Na/Anion_cotransporter"/>
</dbReference>
<dbReference type="InterPro" id="IPR036259">
    <property type="entry name" value="MFS_trans_sf"/>
</dbReference>
<dbReference type="PANTHER" id="PTHR11662:SF432">
    <property type="entry name" value="SIALIN"/>
    <property type="match status" value="1"/>
</dbReference>
<dbReference type="PANTHER" id="PTHR11662">
    <property type="entry name" value="SOLUTE CARRIER FAMILY 17"/>
    <property type="match status" value="1"/>
</dbReference>
<dbReference type="Pfam" id="PF07690">
    <property type="entry name" value="MFS_1"/>
    <property type="match status" value="1"/>
</dbReference>
<dbReference type="SUPFAM" id="SSF103473">
    <property type="entry name" value="MFS general substrate transporter"/>
    <property type="match status" value="1"/>
</dbReference>
<dbReference type="PROSITE" id="PS50850">
    <property type="entry name" value="MFS"/>
    <property type="match status" value="1"/>
</dbReference>
<protein>
    <recommendedName>
        <fullName>Sialin</fullName>
    </recommendedName>
    <alternativeName>
        <fullName>H(+)/nitrate cotransporter</fullName>
    </alternativeName>
    <alternativeName>
        <fullName>H(+)/sialic acid cotransporter</fullName>
        <shortName>AST</shortName>
    </alternativeName>
    <alternativeName>
        <fullName>Membrane glycoprotein SP55</fullName>
    </alternativeName>
    <alternativeName>
        <fullName>Solute carrier family 17 member 5</fullName>
    </alternativeName>
    <alternativeName>
        <fullName evidence="2">Vesicular excitatory amino acid transporter</fullName>
        <shortName evidence="2">VEAT</shortName>
    </alternativeName>
</protein>
<gene>
    <name type="primary">SLC17A5</name>
</gene>
<evidence type="ECO:0000250" key="1">
    <source>
        <dbReference type="UniProtKB" id="Q5Q0U0"/>
    </source>
</evidence>
<evidence type="ECO:0000250" key="2">
    <source>
        <dbReference type="UniProtKB" id="Q8BN82"/>
    </source>
</evidence>
<evidence type="ECO:0000250" key="3">
    <source>
        <dbReference type="UniProtKB" id="Q9NRA2"/>
    </source>
</evidence>
<evidence type="ECO:0000255" key="4"/>
<evidence type="ECO:0000256" key="5">
    <source>
        <dbReference type="SAM" id="MobiDB-lite"/>
    </source>
</evidence>
<evidence type="ECO:0000269" key="6">
    <source>
    </source>
</evidence>
<evidence type="ECO:0000305" key="7"/>
<reference key="1">
    <citation type="journal article" date="2001" name="Clin. Cancer Res.">
        <title>Identification of a novel membrane protein, HP59, with therapeutic potential as a target of tumor angiogenesis.</title>
        <authorList>
            <person name="Fu C."/>
            <person name="Bardhan S."/>
            <person name="Cetateanu N.D."/>
            <person name="Wamil B.D."/>
            <person name="Wang Y."/>
            <person name="Yan H.-P."/>
            <person name="Shi E."/>
            <person name="Carter C."/>
            <person name="Venkov C."/>
            <person name="Yakes F.M."/>
            <person name="Page D.L."/>
            <person name="Lloyd R.S."/>
            <person name="Mernaugh R.L."/>
            <person name="Hellerqvist C.G."/>
        </authorList>
    </citation>
    <scope>NUCLEOTIDE SEQUENCE [MRNA]</scope>
    <scope>FUNCTION</scope>
    <scope>TISSUE SPECIFICITY</scope>
    <source>
        <tissue>Lung</tissue>
    </source>
</reference>
<sequence>MKSPVSDLAPSDGEEGSDRTPLLQRAPRAEPAPVCCSARYNLAFLSFFGFFVLYSLRVNLSVALVDMVDSNTTAKDNRTSYECAEHSAPIKVLHNQTGKKYRWDAETQGWILGSFFYGYIITQIPGGYVASRSGGKLLLGFGIFATAIFTLFTPLAADFGVGALVALRALEGLGEGVTYPAMHAMWSSWAPPLERSKLLSISYAGAQLGTVVSLPLSGVICYYMNWTYVFYFFGIVGIIWFILWICLVSDTPETHKTITPYEKEYILSSLKNQLSSQKSVPWIPMLKSLPLWAIVVAHFSYNWTFYTLLTLLPTYMKEVLRFNIQENGFLSAVPYLGCWLCMILSGQAADNLRARWNFSTLWVRRVFSLIGMIGPAIFLVAAGFIGCDYSLAVAFLTISTTLGGFCSSGFSINHLDIAPSYAGILLGITNTFATIPGMIGPIIARSLTPENTIGEWQTVFCIAAAINVFGAIFFTLFAKGEVQNWAISDHQGHRN</sequence>
<accession>Q9MZD1</accession>
<feature type="chain" id="PRO_0000220949" description="Sialin">
    <location>
        <begin position="1"/>
        <end position="495"/>
    </location>
</feature>
<feature type="transmembrane region" description="Helical" evidence="4">
    <location>
        <begin position="42"/>
        <end position="62"/>
    </location>
</feature>
<feature type="transmembrane region" description="Helical" evidence="4">
    <location>
        <begin position="110"/>
        <end position="130"/>
    </location>
</feature>
<feature type="transmembrane region" description="Helical" evidence="4">
    <location>
        <begin position="137"/>
        <end position="157"/>
    </location>
</feature>
<feature type="transmembrane region" description="Helical" evidence="4">
    <location>
        <begin position="159"/>
        <end position="179"/>
    </location>
</feature>
<feature type="transmembrane region" description="Helical" evidence="4">
    <location>
        <begin position="201"/>
        <end position="221"/>
    </location>
</feature>
<feature type="transmembrane region" description="Helical" evidence="4">
    <location>
        <begin position="228"/>
        <end position="248"/>
    </location>
</feature>
<feature type="transmembrane region" description="Helical" evidence="4">
    <location>
        <begin position="289"/>
        <end position="309"/>
    </location>
</feature>
<feature type="transmembrane region" description="Helical" evidence="4">
    <location>
        <begin position="329"/>
        <end position="349"/>
    </location>
</feature>
<feature type="transmembrane region" description="Helical" evidence="4">
    <location>
        <begin position="366"/>
        <end position="386"/>
    </location>
</feature>
<feature type="transmembrane region" description="Helical" evidence="4">
    <location>
        <begin position="392"/>
        <end position="412"/>
    </location>
</feature>
<feature type="transmembrane region" description="Helical" evidence="4">
    <location>
        <begin position="424"/>
        <end position="444"/>
    </location>
</feature>
<feature type="transmembrane region" description="Helical" evidence="4">
    <location>
        <begin position="458"/>
        <end position="478"/>
    </location>
</feature>
<feature type="region of interest" description="Disordered" evidence="5">
    <location>
        <begin position="1"/>
        <end position="24"/>
    </location>
</feature>
<feature type="short sequence motif" description="Dileucine internalization motif" evidence="3">
    <location>
        <begin position="22"/>
        <end position="23"/>
    </location>
</feature>
<feature type="modified residue" description="Phosphoserine" evidence="3">
    <location>
        <position position="3"/>
    </location>
</feature>
<feature type="glycosylation site" description="N-linked (GlcNAc...) asparagine" evidence="4">
    <location>
        <position position="71"/>
    </location>
</feature>
<feature type="glycosylation site" description="N-linked (GlcNAc...) asparagine" evidence="4">
    <location>
        <position position="77"/>
    </location>
</feature>
<feature type="glycosylation site" description="N-linked (GlcNAc...) asparagine" evidence="4">
    <location>
        <position position="95"/>
    </location>
</feature>